<feature type="chain" id="PRO_0000134387" description="MEMO1 family protein PH1626">
    <location>
        <begin position="1"/>
        <end position="291"/>
    </location>
</feature>
<evidence type="ECO:0000255" key="1">
    <source>
        <dbReference type="HAMAP-Rule" id="MF_00055"/>
    </source>
</evidence>
<evidence type="ECO:0000305" key="2"/>
<sequence length="291" mass="32448">MRRYPAVAGQFYPEGDALIEMLSSFFKDLGEEGTKRTITAGVAPHAGYVFSGFTASRTYKAIYEDGLPEVFVIFGPNHTGLGSPIALYPEGEWITPMGSIKVDSKFAKEIVKRSGIADLDDLAHKYEHSIEVQLPFIQYIAEKAGVEVKIVPITLGIQDEEVSRSLGRSIFEASTSLGRDTIIIASTDFMHYGSFYGYVPFRGRPEELPNMVRDWDMRIIRRILDFDLDGMFSEIREMNHTMCGPGGVGAGIIYSRLMKAKEAELLHYTTSFEVSRSPDAIVGYASIIMKR</sequence>
<proteinExistence type="inferred from homology"/>
<organism>
    <name type="scientific">Pyrococcus horikoshii (strain ATCC 700860 / DSM 12428 / JCM 9974 / NBRC 100139 / OT-3)</name>
    <dbReference type="NCBI Taxonomy" id="70601"/>
    <lineage>
        <taxon>Archaea</taxon>
        <taxon>Methanobacteriati</taxon>
        <taxon>Methanobacteriota</taxon>
        <taxon>Thermococci</taxon>
        <taxon>Thermococcales</taxon>
        <taxon>Thermococcaceae</taxon>
        <taxon>Pyrococcus</taxon>
    </lineage>
</organism>
<reference key="1">
    <citation type="journal article" date="1998" name="DNA Res.">
        <title>Complete sequence and gene organization of the genome of a hyper-thermophilic archaebacterium, Pyrococcus horikoshii OT3.</title>
        <authorList>
            <person name="Kawarabayasi Y."/>
            <person name="Sawada M."/>
            <person name="Horikawa H."/>
            <person name="Haikawa Y."/>
            <person name="Hino Y."/>
            <person name="Yamamoto S."/>
            <person name="Sekine M."/>
            <person name="Baba S."/>
            <person name="Kosugi H."/>
            <person name="Hosoyama A."/>
            <person name="Nagai Y."/>
            <person name="Sakai M."/>
            <person name="Ogura K."/>
            <person name="Otsuka R."/>
            <person name="Nakazawa H."/>
            <person name="Takamiya M."/>
            <person name="Ohfuku Y."/>
            <person name="Funahashi T."/>
            <person name="Tanaka T."/>
            <person name="Kudoh Y."/>
            <person name="Yamazaki J."/>
            <person name="Kushida N."/>
            <person name="Oguchi A."/>
            <person name="Aoki K."/>
            <person name="Yoshizawa T."/>
            <person name="Nakamura Y."/>
            <person name="Robb F.T."/>
            <person name="Horikoshi K."/>
            <person name="Masuchi Y."/>
            <person name="Shizuya H."/>
            <person name="Kikuchi H."/>
        </authorList>
    </citation>
    <scope>NUCLEOTIDE SEQUENCE [LARGE SCALE GENOMIC DNA]</scope>
    <source>
        <strain>ATCC 700860 / DSM 12428 / JCM 9974 / NBRC 100139 / OT-3</strain>
    </source>
</reference>
<accession>O59292</accession>
<name>Y1626_PYRHO</name>
<gene>
    <name type="ordered locus">PH1626</name>
</gene>
<dbReference type="EMBL" id="BA000001">
    <property type="protein sequence ID" value="BAA30738.1"/>
    <property type="status" value="ALT_INIT"/>
    <property type="molecule type" value="Genomic_DNA"/>
</dbReference>
<dbReference type="PIR" id="B71042">
    <property type="entry name" value="B71042"/>
</dbReference>
<dbReference type="RefSeq" id="WP_048053443.1">
    <property type="nucleotide sequence ID" value="NC_000961.1"/>
</dbReference>
<dbReference type="SMR" id="O59292"/>
<dbReference type="STRING" id="70601.gene:9378616"/>
<dbReference type="EnsemblBacteria" id="BAA30738">
    <property type="protein sequence ID" value="BAA30738"/>
    <property type="gene ID" value="BAA30738"/>
</dbReference>
<dbReference type="GeneID" id="1442478"/>
<dbReference type="KEGG" id="pho:PH1626"/>
<dbReference type="eggNOG" id="arCOG01728">
    <property type="taxonomic scope" value="Archaea"/>
</dbReference>
<dbReference type="OrthoDB" id="372162at2157"/>
<dbReference type="Proteomes" id="UP000000752">
    <property type="component" value="Chromosome"/>
</dbReference>
<dbReference type="CDD" id="cd07361">
    <property type="entry name" value="MEMO_like"/>
    <property type="match status" value="1"/>
</dbReference>
<dbReference type="Gene3D" id="3.40.830.10">
    <property type="entry name" value="LigB-like"/>
    <property type="match status" value="1"/>
</dbReference>
<dbReference type="HAMAP" id="MF_00055">
    <property type="entry name" value="MEMO1"/>
    <property type="match status" value="1"/>
</dbReference>
<dbReference type="InterPro" id="IPR002737">
    <property type="entry name" value="MEMO1_fam"/>
</dbReference>
<dbReference type="NCBIfam" id="TIGR04336">
    <property type="entry name" value="AmmeMemoSam_B"/>
    <property type="match status" value="1"/>
</dbReference>
<dbReference type="NCBIfam" id="NF001987">
    <property type="entry name" value="PRK00782.1"/>
    <property type="match status" value="1"/>
</dbReference>
<dbReference type="PANTHER" id="PTHR11060">
    <property type="entry name" value="PROTEIN MEMO1"/>
    <property type="match status" value="1"/>
</dbReference>
<dbReference type="PANTHER" id="PTHR11060:SF0">
    <property type="entry name" value="PROTEIN MEMO1"/>
    <property type="match status" value="1"/>
</dbReference>
<dbReference type="Pfam" id="PF01875">
    <property type="entry name" value="Memo"/>
    <property type="match status" value="1"/>
</dbReference>
<protein>
    <recommendedName>
        <fullName evidence="1">MEMO1 family protein PH1626</fullName>
    </recommendedName>
</protein>
<comment type="similarity">
    <text evidence="1">Belongs to the MEMO1 family.</text>
</comment>
<comment type="sequence caution" evidence="2">
    <conflict type="erroneous initiation">
        <sequence resource="EMBL-CDS" id="BAA30738"/>
    </conflict>
</comment>